<name>HRH2_HUMAN</name>
<dbReference type="EMBL" id="M64799">
    <property type="protein sequence ID" value="AAA58647.1"/>
    <property type="molecule type" value="Genomic_DNA"/>
</dbReference>
<dbReference type="EMBL" id="D49783">
    <property type="protein sequence ID" value="BAA08618.1"/>
    <property type="molecule type" value="Genomic_DNA"/>
</dbReference>
<dbReference type="EMBL" id="AB023486">
    <property type="protein sequence ID" value="BAA84279.1"/>
    <property type="molecule type" value="Genomic_DNA"/>
</dbReference>
<dbReference type="EMBL" id="AB041384">
    <property type="protein sequence ID" value="BAA94469.1"/>
    <property type="molecule type" value="Genomic_DNA"/>
</dbReference>
<dbReference type="EMBL" id="AY136744">
    <property type="protein sequence ID" value="AAN01270.1"/>
    <property type="molecule type" value="mRNA"/>
</dbReference>
<dbReference type="EMBL" id="AB451483">
    <property type="protein sequence ID" value="BAG70297.1"/>
    <property type="molecule type" value="mRNA"/>
</dbReference>
<dbReference type="EMBL" id="CH471062">
    <property type="protein sequence ID" value="EAW61369.1"/>
    <property type="molecule type" value="Genomic_DNA"/>
</dbReference>
<dbReference type="EMBL" id="BC054510">
    <property type="protein sequence ID" value="AAH54510.1"/>
    <property type="molecule type" value="mRNA"/>
</dbReference>
<dbReference type="EMBL" id="X98133">
    <property type="protein sequence ID" value="CAA66832.1"/>
    <property type="molecule type" value="Genomic_DNA"/>
</dbReference>
<dbReference type="CCDS" id="CCDS47344.1">
    <molecule id="P25021-2"/>
</dbReference>
<dbReference type="PIR" id="JH0449">
    <property type="entry name" value="JH0449"/>
</dbReference>
<dbReference type="RefSeq" id="NP_001124527.1">
    <molecule id="P25021-2"/>
    <property type="nucleotide sequence ID" value="NM_001131055.2"/>
</dbReference>
<dbReference type="RefSeq" id="NP_071640.1">
    <property type="nucleotide sequence ID" value="NM_022304.2"/>
</dbReference>
<dbReference type="PDB" id="7UL3">
    <property type="method" value="EM"/>
    <property type="resolution" value="3.00 A"/>
    <property type="chains" value="A=1-199, A=248-359"/>
</dbReference>
<dbReference type="PDB" id="8POK">
    <property type="method" value="EM"/>
    <property type="resolution" value="3.40 A"/>
    <property type="chains" value="A=1-359"/>
</dbReference>
<dbReference type="PDB" id="8YN3">
    <property type="method" value="EM"/>
    <property type="resolution" value="2.56 A"/>
    <property type="chains" value="R=1-312"/>
</dbReference>
<dbReference type="PDB" id="8YN4">
    <property type="method" value="EM"/>
    <property type="resolution" value="2.97 A"/>
    <property type="chains" value="R=1-312"/>
</dbReference>
<dbReference type="PDB" id="8YUT">
    <property type="method" value="EM"/>
    <property type="resolution" value="2.70 A"/>
    <property type="chains" value="R=2-359"/>
</dbReference>
<dbReference type="PDBsum" id="7UL3"/>
<dbReference type="PDBsum" id="8POK"/>
<dbReference type="PDBsum" id="8YN3"/>
<dbReference type="PDBsum" id="8YN4"/>
<dbReference type="PDBsum" id="8YUT"/>
<dbReference type="EMDB" id="EMD-17793"/>
<dbReference type="EMDB" id="EMD-26590"/>
<dbReference type="EMDB" id="EMD-39413"/>
<dbReference type="EMDB" id="EMD-39414"/>
<dbReference type="EMDB" id="EMD-39582"/>
<dbReference type="SMR" id="P25021"/>
<dbReference type="BioGRID" id="109510">
    <property type="interactions" value="1"/>
</dbReference>
<dbReference type="CORUM" id="P25021"/>
<dbReference type="FunCoup" id="P25021">
    <property type="interactions" value="1004"/>
</dbReference>
<dbReference type="STRING" id="9606.ENSP00000366506"/>
<dbReference type="BindingDB" id="P25021"/>
<dbReference type="ChEMBL" id="CHEMBL1941"/>
<dbReference type="DrugBank" id="DB00321">
    <property type="generic name" value="Amitriptyline"/>
</dbReference>
<dbReference type="DrugBank" id="DB01238">
    <property type="generic name" value="Aripiprazole"/>
</dbReference>
<dbReference type="DrugBank" id="DB06216">
    <property type="generic name" value="Asenapine"/>
</dbReference>
<dbReference type="DrugBank" id="DB00972">
    <property type="generic name" value="Azelastine"/>
</dbReference>
<dbReference type="DrugBank" id="DB00272">
    <property type="generic name" value="Betazole"/>
</dbReference>
<dbReference type="DrugBank" id="DB00501">
    <property type="generic name" value="Cimetidine"/>
</dbReference>
<dbReference type="DrugBank" id="DB00434">
    <property type="generic name" value="Cyproheptadine"/>
</dbReference>
<dbReference type="DrugBank" id="DB01142">
    <property type="generic name" value="Doxepin"/>
</dbReference>
<dbReference type="DrugBank" id="DB00751">
    <property type="generic name" value="Epinastine"/>
</dbReference>
<dbReference type="DrugBank" id="DB00927">
    <property type="generic name" value="Famotidine"/>
</dbReference>
<dbReference type="DrugBank" id="DB05381">
    <property type="generic name" value="Histamine"/>
</dbReference>
<dbReference type="DrugBank" id="DB05369">
    <property type="generic name" value="HZT-501"/>
</dbReference>
<dbReference type="DrugBank" id="DB12884">
    <property type="generic name" value="Lavoltidine"/>
</dbReference>
<dbReference type="DrugBank" id="DB00408">
    <property type="generic name" value="Loxapine"/>
</dbReference>
<dbReference type="DrugBank" id="DB00940">
    <property type="generic name" value="Methantheline"/>
</dbReference>
<dbReference type="DrugBank" id="DB08805">
    <property type="generic name" value="Metiamide"/>
</dbReference>
<dbReference type="DrugBank" id="DB13760">
    <property type="generic name" value="Niperotidine"/>
</dbReference>
<dbReference type="DrugBank" id="DB00585">
    <property type="generic name" value="Nizatidine"/>
</dbReference>
<dbReference type="DrugBank" id="DB00768">
    <property type="generic name" value="Olopatadine"/>
</dbReference>
<dbReference type="DrugBank" id="DB01069">
    <property type="generic name" value="Promethazine"/>
</dbReference>
<dbReference type="DrugBank" id="DB00863">
    <property type="generic name" value="Ranitidine"/>
</dbReference>
<dbReference type="DrugBank" id="DB08806">
    <property type="generic name" value="Roxatidine acetate"/>
</dbReference>
<dbReference type="DrugBank" id="DB00797">
    <property type="generic name" value="Tolazoline"/>
</dbReference>
<dbReference type="DrugBank" id="DB09185">
    <property type="generic name" value="Viloxazine"/>
</dbReference>
<dbReference type="DrugCentral" id="P25021"/>
<dbReference type="GuidetoPHARMACOLOGY" id="263"/>
<dbReference type="GlyCosmos" id="P25021">
    <property type="glycosylation" value="1 site, No reported glycans"/>
</dbReference>
<dbReference type="GlyGen" id="P25021">
    <property type="glycosylation" value="2 sites"/>
</dbReference>
<dbReference type="PhosphoSitePlus" id="P25021"/>
<dbReference type="BioMuta" id="HRH2"/>
<dbReference type="DMDM" id="123120"/>
<dbReference type="PaxDb" id="9606-ENSP00000366506"/>
<dbReference type="PeptideAtlas" id="P25021"/>
<dbReference type="Antibodypedia" id="2931">
    <property type="antibodies" value="337 antibodies from 38 providers"/>
</dbReference>
<dbReference type="DNASU" id="3274"/>
<dbReference type="Ensembl" id="ENST00000377291.2">
    <molecule id="P25021-2"/>
    <property type="protein sequence ID" value="ENSP00000366506.2"/>
    <property type="gene ID" value="ENSG00000113749.8"/>
</dbReference>
<dbReference type="GeneID" id="3274"/>
<dbReference type="KEGG" id="hsa:3274"/>
<dbReference type="UCSC" id="uc003mdc.5">
    <molecule id="P25021-1"/>
    <property type="organism name" value="human"/>
</dbReference>
<dbReference type="AGR" id="HGNC:5183"/>
<dbReference type="CTD" id="3274"/>
<dbReference type="DisGeNET" id="3274"/>
<dbReference type="GeneCards" id="HRH2"/>
<dbReference type="HGNC" id="HGNC:5183">
    <property type="gene designation" value="HRH2"/>
</dbReference>
<dbReference type="HPA" id="ENSG00000113749">
    <property type="expression patterns" value="Tissue enhanced (bone marrow, heart muscle)"/>
</dbReference>
<dbReference type="MIM" id="142703">
    <property type="type" value="gene"/>
</dbReference>
<dbReference type="neXtProt" id="NX_P25021"/>
<dbReference type="OpenTargets" id="ENSG00000113749"/>
<dbReference type="PharmGKB" id="PA29457"/>
<dbReference type="VEuPathDB" id="HostDB:ENSG00000113749"/>
<dbReference type="eggNOG" id="KOG3656">
    <property type="taxonomic scope" value="Eukaryota"/>
</dbReference>
<dbReference type="GeneTree" id="ENSGT00940000158761"/>
<dbReference type="HOGENOM" id="CLU_009579_11_0_1"/>
<dbReference type="InParanoid" id="P25021"/>
<dbReference type="OMA" id="CGNVMVC"/>
<dbReference type="OrthoDB" id="5951059at2759"/>
<dbReference type="PAN-GO" id="P25021">
    <property type="GO annotations" value="6 GO annotations based on evolutionary models"/>
</dbReference>
<dbReference type="PhylomeDB" id="P25021"/>
<dbReference type="TreeFam" id="TF316350"/>
<dbReference type="PathwayCommons" id="P25021"/>
<dbReference type="Reactome" id="R-HSA-390650">
    <property type="pathway name" value="Histamine receptors"/>
</dbReference>
<dbReference type="Reactome" id="R-HSA-418555">
    <property type="pathway name" value="G alpha (s) signalling events"/>
</dbReference>
<dbReference type="SignaLink" id="P25021"/>
<dbReference type="SIGNOR" id="P25021"/>
<dbReference type="BioGRID-ORCS" id="3274">
    <property type="hits" value="15 hits in 1155 CRISPR screens"/>
</dbReference>
<dbReference type="GeneWiki" id="Histamine_H2_receptor"/>
<dbReference type="GenomeRNAi" id="3274"/>
<dbReference type="Pharos" id="P25021">
    <property type="development level" value="Tclin"/>
</dbReference>
<dbReference type="PRO" id="PR:P25021"/>
<dbReference type="Proteomes" id="UP000005640">
    <property type="component" value="Chromosome 5"/>
</dbReference>
<dbReference type="RNAct" id="P25021">
    <property type="molecule type" value="protein"/>
</dbReference>
<dbReference type="Bgee" id="ENSG00000113749">
    <property type="expression patterns" value="Expressed in monocyte and 116 other cell types or tissues"/>
</dbReference>
<dbReference type="ExpressionAtlas" id="P25021">
    <property type="expression patterns" value="baseline and differential"/>
</dbReference>
<dbReference type="GO" id="GO:0030425">
    <property type="term" value="C:dendrite"/>
    <property type="evidence" value="ECO:0000318"/>
    <property type="project" value="GO_Central"/>
</dbReference>
<dbReference type="GO" id="GO:0005886">
    <property type="term" value="C:plasma membrane"/>
    <property type="evidence" value="ECO:0000318"/>
    <property type="project" value="GO_Central"/>
</dbReference>
<dbReference type="GO" id="GO:0045202">
    <property type="term" value="C:synapse"/>
    <property type="evidence" value="ECO:0007669"/>
    <property type="project" value="GOC"/>
</dbReference>
<dbReference type="GO" id="GO:0004969">
    <property type="term" value="F:histamine receptor activity"/>
    <property type="evidence" value="ECO:0000318"/>
    <property type="project" value="GO_Central"/>
</dbReference>
<dbReference type="GO" id="GO:0030594">
    <property type="term" value="F:neurotransmitter receptor activity"/>
    <property type="evidence" value="ECO:0000318"/>
    <property type="project" value="GO_Central"/>
</dbReference>
<dbReference type="GO" id="GO:0007268">
    <property type="term" value="P:chemical synaptic transmission"/>
    <property type="evidence" value="ECO:0000318"/>
    <property type="project" value="GO_Central"/>
</dbReference>
<dbReference type="GO" id="GO:0007187">
    <property type="term" value="P:G protein-coupled receptor signaling pathway, coupled to cyclic nucleotide second messenger"/>
    <property type="evidence" value="ECO:0000318"/>
    <property type="project" value="GO_Central"/>
</dbReference>
<dbReference type="GO" id="GO:0001696">
    <property type="term" value="P:gastric acid secretion"/>
    <property type="evidence" value="ECO:0007669"/>
    <property type="project" value="InterPro"/>
</dbReference>
<dbReference type="GO" id="GO:0006955">
    <property type="term" value="P:immune response"/>
    <property type="evidence" value="ECO:0000304"/>
    <property type="project" value="ProtInc"/>
</dbReference>
<dbReference type="GO" id="GO:0045907">
    <property type="term" value="P:positive regulation of vasoconstriction"/>
    <property type="evidence" value="ECO:0007669"/>
    <property type="project" value="InterPro"/>
</dbReference>
<dbReference type="CDD" id="cd15051">
    <property type="entry name" value="7tmA_Histamine_H2R"/>
    <property type="match status" value="1"/>
</dbReference>
<dbReference type="FunFam" id="1.20.1070.10:FF:000121">
    <property type="entry name" value="Histamine H2 receptor"/>
    <property type="match status" value="1"/>
</dbReference>
<dbReference type="Gene3D" id="1.20.1070.10">
    <property type="entry name" value="Rhodopsin 7-helix transmembrane proteins"/>
    <property type="match status" value="1"/>
</dbReference>
<dbReference type="InterPro" id="IPR000276">
    <property type="entry name" value="GPCR_Rhodpsn"/>
</dbReference>
<dbReference type="InterPro" id="IPR017452">
    <property type="entry name" value="GPCR_Rhodpsn_7TM"/>
</dbReference>
<dbReference type="InterPro" id="IPR000503">
    <property type="entry name" value="Histamine_H2_rcpt"/>
</dbReference>
<dbReference type="PANTHER" id="PTHR24247">
    <property type="entry name" value="5-HYDROXYTRYPTAMINE RECEPTOR"/>
    <property type="match status" value="1"/>
</dbReference>
<dbReference type="PANTHER" id="PTHR24247:SF278">
    <property type="entry name" value="HISTAMINE H2 RECEPTOR"/>
    <property type="match status" value="1"/>
</dbReference>
<dbReference type="Pfam" id="PF00001">
    <property type="entry name" value="7tm_1"/>
    <property type="match status" value="1"/>
</dbReference>
<dbReference type="PRINTS" id="PR00237">
    <property type="entry name" value="GPCRRHODOPSN"/>
</dbReference>
<dbReference type="PRINTS" id="PR00531">
    <property type="entry name" value="HISTAMINEH2R"/>
</dbReference>
<dbReference type="SMART" id="SM01381">
    <property type="entry name" value="7TM_GPCR_Srsx"/>
    <property type="match status" value="1"/>
</dbReference>
<dbReference type="SUPFAM" id="SSF81321">
    <property type="entry name" value="Family A G protein-coupled receptor-like"/>
    <property type="match status" value="1"/>
</dbReference>
<dbReference type="PROSITE" id="PS00237">
    <property type="entry name" value="G_PROTEIN_RECEP_F1_1"/>
    <property type="match status" value="1"/>
</dbReference>
<dbReference type="PROSITE" id="PS50262">
    <property type="entry name" value="G_PROTEIN_RECEP_F1_2"/>
    <property type="match status" value="1"/>
</dbReference>
<organism>
    <name type="scientific">Homo sapiens</name>
    <name type="common">Human</name>
    <dbReference type="NCBI Taxonomy" id="9606"/>
    <lineage>
        <taxon>Eukaryota</taxon>
        <taxon>Metazoa</taxon>
        <taxon>Chordata</taxon>
        <taxon>Craniata</taxon>
        <taxon>Vertebrata</taxon>
        <taxon>Euteleostomi</taxon>
        <taxon>Mammalia</taxon>
        <taxon>Eutheria</taxon>
        <taxon>Euarchontoglires</taxon>
        <taxon>Primates</taxon>
        <taxon>Haplorrhini</taxon>
        <taxon>Catarrhini</taxon>
        <taxon>Hominidae</taxon>
        <taxon>Homo</taxon>
    </lineage>
</organism>
<protein>
    <recommendedName>
        <fullName>Histamine H2 receptor</fullName>
        <shortName>H2R</shortName>
        <shortName>HH2R</shortName>
    </recommendedName>
    <alternativeName>
        <fullName>Gastric receptor I</fullName>
    </alternativeName>
</protein>
<proteinExistence type="evidence at protein level"/>
<comment type="function">
    <text evidence="1">The H2 subclass of histamine receptors mediates gastric acid secretion. Also appears to regulate gastrointestinal motility and intestinal secretion. Possible role in regulating cell growth and differentiation. The activity of this receptor is mediated by G proteins which activate adenylyl cyclase and, through a separate G protein-dependent mechanism, the phosphoinositide/protein kinase (PKC) signaling pathway (By similarity).</text>
</comment>
<comment type="subcellular location">
    <subcellularLocation>
        <location>Cell membrane</location>
        <topology>Multi-pass membrane protein</topology>
    </subcellularLocation>
</comment>
<comment type="alternative products">
    <event type="alternative splicing"/>
    <isoform>
        <id>P25021-1</id>
        <name>1</name>
        <sequence type="displayed"/>
    </isoform>
    <isoform>
        <id>P25021-2</id>
        <name>2</name>
        <sequence type="described" ref="VSP_043594"/>
    </isoform>
</comment>
<comment type="miscellaneous">
    <text>Antagonists for this receptor have proven to be effective therapy for acid peptic disorders of the gastrointestinal tract. Certain antagonists are used in the treatment of neuropsychiatric and neurological diseases such as schizophrenia, Alzheimer disease and Parkinson disease.</text>
</comment>
<comment type="similarity">
    <text evidence="3">Belongs to the G-protein coupled receptor 1 family.</text>
</comment>
<comment type="online information" name="Wikipedia">
    <link uri="https://en.wikipedia.org/wiki/H2_receptor"/>
    <text>H2 receptor entry</text>
</comment>
<accession>P25021</accession>
<accession>B5BUP7</accession>
<accession>Q14464</accession>
<accession>Q7Z5R9</accession>
<keyword id="KW-0002">3D-structure</keyword>
<keyword id="KW-0025">Alternative splicing</keyword>
<keyword id="KW-1003">Cell membrane</keyword>
<keyword id="KW-1015">Disulfide bond</keyword>
<keyword id="KW-0297">G-protein coupled receptor</keyword>
<keyword id="KW-0325">Glycoprotein</keyword>
<keyword id="KW-0449">Lipoprotein</keyword>
<keyword id="KW-0472">Membrane</keyword>
<keyword id="KW-0564">Palmitate</keyword>
<keyword id="KW-1267">Proteomics identification</keyword>
<keyword id="KW-0675">Receptor</keyword>
<keyword id="KW-1185">Reference proteome</keyword>
<keyword id="KW-0807">Transducer</keyword>
<keyword id="KW-0812">Transmembrane</keyword>
<keyword id="KW-1133">Transmembrane helix</keyword>
<gene>
    <name type="primary">HRH2</name>
</gene>
<reference key="1">
    <citation type="journal article" date="1991" name="Biochem. Biophys. Res. Commun.">
        <title>Molecular cloning of the human histamine H2 receptor.</title>
        <authorList>
            <person name="Gantz I."/>
            <person name="Munzert G."/>
            <person name="Tashiro T."/>
            <person name="Schaeffer M."/>
            <person name="Wang L.-D."/>
            <person name="DelValle J."/>
            <person name="Yamada T."/>
        </authorList>
    </citation>
    <scope>NUCLEOTIDE SEQUENCE [GENOMIC DNA]</scope>
</reference>
<reference key="2">
    <citation type="journal article" date="1995" name="Biochem. Biophys. Res. Commun.">
        <title>Identification of the promoter region of the human histamine H2-receptor gene.</title>
        <authorList>
            <person name="Nishi T."/>
            <person name="Koike T."/>
            <person name="Oka T."/>
            <person name="Maeda M."/>
            <person name="Futai M."/>
        </authorList>
    </citation>
    <scope>NUCLEOTIDE SEQUENCE [GENOMIC DNA]</scope>
    <source>
        <tissue>Liver</tissue>
    </source>
</reference>
<reference key="3">
    <citation type="journal article" date="1999" name="FEBS Lett.">
        <title>Human histamine H2 receptor gene: multiple transcription initiation and tissue-specific expression.</title>
        <authorList>
            <person name="Murakami H."/>
            <person name="Sun-Wada G."/>
            <person name="Matsumoto M."/>
            <person name="Nishi T."/>
            <person name="Wada Y."/>
            <person name="Futai M."/>
        </authorList>
    </citation>
    <scope>NUCLEOTIDE SEQUENCE [GENOMIC DNA]</scope>
</reference>
<reference key="4">
    <citation type="journal article" date="2004" name="Mol. Biol. Evol.">
        <title>Human-specific amino acid changes found in 103 protein-coding genes.</title>
        <authorList>
            <person name="Kitano T."/>
            <person name="Liu Y.-H."/>
            <person name="Ueda S."/>
            <person name="Saitou N."/>
        </authorList>
    </citation>
    <scope>NUCLEOTIDE SEQUENCE [GENOMIC DNA]</scope>
</reference>
<reference key="5">
    <citation type="submission" date="2002-07" db="EMBL/GenBank/DDBJ databases">
        <title>cDNA clones of human proteins involved in signal transduction sequenced by the Guthrie cDNA resource center (www.cdna.org).</title>
        <authorList>
            <person name="Puhl H.L. III"/>
            <person name="Ikeda S.R."/>
            <person name="Aronstam R.S."/>
        </authorList>
    </citation>
    <scope>NUCLEOTIDE SEQUENCE [LARGE SCALE MRNA] (ISOFORM 1)</scope>
    <source>
        <tissue>Stomach</tissue>
    </source>
</reference>
<reference key="6">
    <citation type="journal article" date="2008" name="Nat. Methods">
        <title>Human protein factory for converting the transcriptome into an in vitro-expressed proteome.</title>
        <authorList>
            <person name="Goshima N."/>
            <person name="Kawamura Y."/>
            <person name="Fukumoto A."/>
            <person name="Miura A."/>
            <person name="Honma R."/>
            <person name="Satoh R."/>
            <person name="Wakamatsu A."/>
            <person name="Yamamoto J."/>
            <person name="Kimura K."/>
            <person name="Nishikawa T."/>
            <person name="Andoh T."/>
            <person name="Iida Y."/>
            <person name="Ishikawa K."/>
            <person name="Ito E."/>
            <person name="Kagawa N."/>
            <person name="Kaminaga C."/>
            <person name="Kanehori K."/>
            <person name="Kawakami B."/>
            <person name="Kenmochi K."/>
            <person name="Kimura R."/>
            <person name="Kobayashi M."/>
            <person name="Kuroita T."/>
            <person name="Kuwayama H."/>
            <person name="Maruyama Y."/>
            <person name="Matsuo K."/>
            <person name="Minami K."/>
            <person name="Mitsubori M."/>
            <person name="Mori M."/>
            <person name="Morishita R."/>
            <person name="Murase A."/>
            <person name="Nishikawa A."/>
            <person name="Nishikawa S."/>
            <person name="Okamoto T."/>
            <person name="Sakagami N."/>
            <person name="Sakamoto Y."/>
            <person name="Sasaki Y."/>
            <person name="Seki T."/>
            <person name="Sono S."/>
            <person name="Sugiyama A."/>
            <person name="Sumiya T."/>
            <person name="Takayama T."/>
            <person name="Takayama Y."/>
            <person name="Takeda H."/>
            <person name="Togashi T."/>
            <person name="Yahata K."/>
            <person name="Yamada H."/>
            <person name="Yanagisawa Y."/>
            <person name="Endo Y."/>
            <person name="Imamoto F."/>
            <person name="Kisu Y."/>
            <person name="Tanaka S."/>
            <person name="Isogai T."/>
            <person name="Imai J."/>
            <person name="Watanabe S."/>
            <person name="Nomura N."/>
        </authorList>
    </citation>
    <scope>NUCLEOTIDE SEQUENCE [LARGE SCALE MRNA] (ISOFORM 1)</scope>
</reference>
<reference key="7">
    <citation type="submission" date="2005-09" db="EMBL/GenBank/DDBJ databases">
        <authorList>
            <person name="Mural R.J."/>
            <person name="Istrail S."/>
            <person name="Sutton G.G."/>
            <person name="Florea L."/>
            <person name="Halpern A.L."/>
            <person name="Mobarry C.M."/>
            <person name="Lippert R."/>
            <person name="Walenz B."/>
            <person name="Shatkay H."/>
            <person name="Dew I."/>
            <person name="Miller J.R."/>
            <person name="Flanigan M.J."/>
            <person name="Edwards N.J."/>
            <person name="Bolanos R."/>
            <person name="Fasulo D."/>
            <person name="Halldorsson B.V."/>
            <person name="Hannenhalli S."/>
            <person name="Turner R."/>
            <person name="Yooseph S."/>
            <person name="Lu F."/>
            <person name="Nusskern D.R."/>
            <person name="Shue B.C."/>
            <person name="Zheng X.H."/>
            <person name="Zhong F."/>
            <person name="Delcher A.L."/>
            <person name="Huson D.H."/>
            <person name="Kravitz S.A."/>
            <person name="Mouchard L."/>
            <person name="Reinert K."/>
            <person name="Remington K.A."/>
            <person name="Clark A.G."/>
            <person name="Waterman M.S."/>
            <person name="Eichler E.E."/>
            <person name="Adams M.D."/>
            <person name="Hunkapiller M.W."/>
            <person name="Myers E.W."/>
            <person name="Venter J.C."/>
        </authorList>
    </citation>
    <scope>NUCLEOTIDE SEQUENCE [LARGE SCALE GENOMIC DNA]</scope>
</reference>
<reference key="8">
    <citation type="journal article" date="2004" name="Genome Res.">
        <title>The status, quality, and expansion of the NIH full-length cDNA project: the Mammalian Gene Collection (MGC).</title>
        <authorList>
            <consortium name="The MGC Project Team"/>
        </authorList>
    </citation>
    <scope>NUCLEOTIDE SEQUENCE [LARGE SCALE MRNA] (ISOFORM 2)</scope>
    <source>
        <tissue>Skin</tissue>
    </source>
</reference>
<reference key="9">
    <citation type="journal article" date="1996" name="NeuroReport">
        <title>Allelic variations of the human histamine H2 receptor gene.</title>
        <authorList>
            <person name="Orange P.R."/>
            <person name="Heath P.R."/>
            <person name="Wright S.R."/>
            <person name="Pearson R.C.A."/>
        </authorList>
    </citation>
    <scope>NUCLEOTIDE SEQUENCE [GENOMIC DNA] OF 4-351</scope>
    <scope>POLYMORPHISM</scope>
    <source>
        <tissue>Brain</tissue>
    </source>
</reference>
<reference key="10">
    <citation type="journal article" date="1997" name="Am. J. Physiol.">
        <title>Novel insights into histamine H2 receptor biology.</title>
        <authorList>
            <person name="DelValle J."/>
            <person name="Gantz I."/>
        </authorList>
    </citation>
    <scope>REVIEW</scope>
</reference>
<evidence type="ECO:0000250" key="1"/>
<evidence type="ECO:0000255" key="2"/>
<evidence type="ECO:0000255" key="3">
    <source>
        <dbReference type="PROSITE-ProRule" id="PRU00521"/>
    </source>
</evidence>
<evidence type="ECO:0000256" key="4">
    <source>
        <dbReference type="SAM" id="MobiDB-lite"/>
    </source>
</evidence>
<evidence type="ECO:0000303" key="5">
    <source>
    </source>
</evidence>
<evidence type="ECO:0000305" key="6"/>
<evidence type="ECO:0007829" key="7">
    <source>
        <dbReference type="PDB" id="8YN3"/>
    </source>
</evidence>
<sequence>MAPNGTASSFCLDSTACKITITVVLAVLILITVAGNVVVCLAVGLNRRLRNLTNCFIVSLAITDLLLGLLVLPFSAIYQLSCKWSFGKVFCNIYTSLDVMLCTASILNLFMISLDRYCAVMDPLRYPVLVTPVRVAISLVLIWVISITLSFLSIHLGWNSRNETSKGNHTTSKCKVQVNEVYGLVDGLVTFYLPLLIMCITYYRIFKVARDQAKRINHISSWKAATIREHKATVTLAAVMGAFIICWFPYFTAFVYRGLRGDDAINEVLEAIVLWLGYANSALNPILYAALNRDFRTGYQQLFCCRLANRNSHKTSLRSNASQLSRTQSREPRQQEEKPLKLQVWSGTEVTAPQGATDR</sequence>
<feature type="chain" id="PRO_0000069684" description="Histamine H2 receptor">
    <location>
        <begin position="1"/>
        <end position="359"/>
    </location>
</feature>
<feature type="topological domain" description="Extracellular" evidence="2">
    <location>
        <begin position="1"/>
        <end position="22"/>
    </location>
</feature>
<feature type="transmembrane region" description="Helical; Name=1" evidence="2">
    <location>
        <begin position="23"/>
        <end position="44"/>
    </location>
</feature>
<feature type="topological domain" description="Cytoplasmic" evidence="2">
    <location>
        <begin position="45"/>
        <end position="57"/>
    </location>
</feature>
<feature type="transmembrane region" description="Helical; Name=2" evidence="2">
    <location>
        <begin position="58"/>
        <end position="81"/>
    </location>
</feature>
<feature type="topological domain" description="Extracellular" evidence="2">
    <location>
        <begin position="82"/>
        <end position="92"/>
    </location>
</feature>
<feature type="transmembrane region" description="Helical; Name=3" evidence="2">
    <location>
        <begin position="93"/>
        <end position="114"/>
    </location>
</feature>
<feature type="topological domain" description="Cytoplasmic" evidence="2">
    <location>
        <begin position="115"/>
        <end position="134"/>
    </location>
</feature>
<feature type="transmembrane region" description="Helical; Name=4" evidence="2">
    <location>
        <begin position="135"/>
        <end position="159"/>
    </location>
</feature>
<feature type="topological domain" description="Extracellular" evidence="2">
    <location>
        <begin position="160"/>
        <end position="180"/>
    </location>
</feature>
<feature type="transmembrane region" description="Helical; Name=5" evidence="2">
    <location>
        <begin position="181"/>
        <end position="204"/>
    </location>
</feature>
<feature type="topological domain" description="Cytoplasmic" evidence="2">
    <location>
        <begin position="205"/>
        <end position="234"/>
    </location>
</feature>
<feature type="transmembrane region" description="Helical; Name=6" evidence="2">
    <location>
        <begin position="235"/>
        <end position="258"/>
    </location>
</feature>
<feature type="topological domain" description="Extracellular" evidence="2">
    <location>
        <begin position="259"/>
        <end position="267"/>
    </location>
</feature>
<feature type="transmembrane region" description="Helical; Name=7" evidence="2">
    <location>
        <begin position="268"/>
        <end position="289"/>
    </location>
</feature>
<feature type="topological domain" description="Cytoplasmic" evidence="2">
    <location>
        <begin position="290"/>
        <end position="359"/>
    </location>
</feature>
<feature type="region of interest" description="Disordered" evidence="4">
    <location>
        <begin position="316"/>
        <end position="340"/>
    </location>
</feature>
<feature type="compositionally biased region" description="Polar residues" evidence="4">
    <location>
        <begin position="317"/>
        <end position="327"/>
    </location>
</feature>
<feature type="compositionally biased region" description="Basic and acidic residues" evidence="4">
    <location>
        <begin position="328"/>
        <end position="340"/>
    </location>
</feature>
<feature type="site" description="Essential for histamine binding" evidence="1">
    <location>
        <position position="98"/>
    </location>
</feature>
<feature type="site" description="Essential for tiotidine binding and implicated in H2 selectivity" evidence="1">
    <location>
        <position position="186"/>
    </location>
</feature>
<feature type="site" description="Implicated in histamine binding" evidence="1">
    <location>
        <position position="190"/>
    </location>
</feature>
<feature type="lipid moiety-binding region" description="S-palmitoyl cysteine" evidence="1">
    <location>
        <position position="305"/>
    </location>
</feature>
<feature type="glycosylation site" description="N-linked (GlcNAc...) asparagine" evidence="2">
    <location>
        <position position="4"/>
    </location>
</feature>
<feature type="disulfide bond" evidence="3">
    <location>
        <begin position="91"/>
        <end position="174"/>
    </location>
</feature>
<feature type="splice variant" id="VSP_043594" description="In isoform 2." evidence="5">
    <original>R</original>
    <variation>RPWLCLPECWSVELTHSFIHLFIHSFANIHPIPTTCQEL</variation>
    <location>
        <position position="359"/>
    </location>
</feature>
<feature type="sequence variant" id="VAR_009958">
    <original>N</original>
    <variation>D</variation>
    <location>
        <position position="217"/>
    </location>
</feature>
<feature type="sequence variant" id="VAR_009959">
    <original>K</original>
    <variation>R</variation>
    <location>
        <position position="231"/>
    </location>
</feature>
<feature type="sequence variant" id="VAR_009960">
    <original>V</original>
    <variation>M</variation>
    <location>
        <position position="268"/>
    </location>
</feature>
<feature type="sequence conflict" description="In Ref. 9; CAA66832." evidence="6" ref="9">
    <original>V</original>
    <variation>A</variation>
    <location>
        <position position="133"/>
    </location>
</feature>
<feature type="sequence conflict" description="In Ref. 9; CAA66832." evidence="6" ref="9">
    <original>K</original>
    <variation>N</variation>
    <location>
        <position position="175"/>
    </location>
</feature>
<feature type="sequence conflict" description="In Ref. 9; CAA66832." evidence="6" ref="9">
    <original>K</original>
    <variation>R</variation>
    <location>
        <position position="207"/>
    </location>
</feature>
<feature type="helix" evidence="7">
    <location>
        <begin position="15"/>
        <end position="45"/>
    </location>
</feature>
<feature type="helix" evidence="7">
    <location>
        <begin position="52"/>
        <end position="54"/>
    </location>
</feature>
<feature type="helix" evidence="7">
    <location>
        <begin position="55"/>
        <end position="70"/>
    </location>
</feature>
<feature type="helix" evidence="7">
    <location>
        <begin position="72"/>
        <end position="81"/>
    </location>
</feature>
<feature type="helix" evidence="7">
    <location>
        <begin position="88"/>
        <end position="121"/>
    </location>
</feature>
<feature type="turn" evidence="7">
    <location>
        <begin position="123"/>
        <end position="125"/>
    </location>
</feature>
<feature type="helix" evidence="7">
    <location>
        <begin position="126"/>
        <end position="129"/>
    </location>
</feature>
<feature type="helix" evidence="7">
    <location>
        <begin position="132"/>
        <end position="155"/>
    </location>
</feature>
<feature type="helix" evidence="7">
    <location>
        <begin position="180"/>
        <end position="190"/>
    </location>
</feature>
<feature type="helix" evidence="7">
    <location>
        <begin position="192"/>
        <end position="217"/>
    </location>
</feature>
<feature type="strand" evidence="7">
    <location>
        <begin position="221"/>
        <end position="223"/>
    </location>
</feature>
<feature type="helix" evidence="7">
    <location>
        <begin position="231"/>
        <end position="260"/>
    </location>
</feature>
<feature type="helix" evidence="7">
    <location>
        <begin position="267"/>
        <end position="287"/>
    </location>
</feature>
<feature type="turn" evidence="7">
    <location>
        <begin position="288"/>
        <end position="291"/>
    </location>
</feature>
<feature type="helix" evidence="7">
    <location>
        <begin position="293"/>
        <end position="301"/>
    </location>
</feature>